<gene>
    <name type="primary">REV3</name>
    <name type="synonym">PSO1</name>
    <name type="ordered locus">YPL167C</name>
    <name type="ORF">P2535</name>
</gene>
<name>DPOZ_YEAST</name>
<evidence type="ECO:0000250" key="1"/>
<evidence type="ECO:0000250" key="2">
    <source>
        <dbReference type="UniProtKB" id="P15436"/>
    </source>
</evidence>
<evidence type="ECO:0000269" key="3">
    <source>
    </source>
</evidence>
<evidence type="ECO:0000269" key="4">
    <source>
    </source>
</evidence>
<evidence type="ECO:0000269" key="5">
    <source>
    </source>
</evidence>
<evidence type="ECO:0000269" key="6">
    <source>
    </source>
</evidence>
<evidence type="ECO:0000269" key="7">
    <source>
    </source>
</evidence>
<evidence type="ECO:0000305" key="8"/>
<evidence type="ECO:0007829" key="9">
    <source>
        <dbReference type="PDB" id="6V93"/>
    </source>
</evidence>
<evidence type="ECO:0007829" key="10">
    <source>
        <dbReference type="PDB" id="7S0T"/>
    </source>
</evidence>
<evidence type="ECO:0007829" key="11">
    <source>
        <dbReference type="PDB" id="8TLT"/>
    </source>
</evidence>
<reference key="1">
    <citation type="journal article" date="1989" name="J. Bacteriol.">
        <title>REV3, a Saccharomyces cerevisiae gene whose function is required for induced mutagenesis, is predicted to encode a nonessential DNA polymerase.</title>
        <authorList>
            <person name="Morrison A."/>
            <person name="Christensen R.B."/>
            <person name="Alley J."/>
            <person name="Beck A.K."/>
            <person name="Bernstine E.G."/>
            <person name="Lemontt J.F."/>
            <person name="Lawrence C.W."/>
        </authorList>
    </citation>
    <scope>NUCLEOTIDE SEQUENCE [GENOMIC DNA]</scope>
    <scope>FUNCTION</scope>
</reference>
<reference key="2">
    <citation type="journal article" date="1996" name="Yeast">
        <title>The sequence of 55 kb on the left arm of yeast chromosome XVI identifies a small nuclear RNA, a new putative protein kinase and two new putative regulators.</title>
        <authorList>
            <person name="Purnelle B."/>
            <person name="Coster F."/>
            <person name="Goffeau A."/>
        </authorList>
    </citation>
    <scope>NUCLEOTIDE SEQUENCE [GENOMIC DNA]</scope>
    <source>
        <strain>ATCC 204511 / S288c / AB972</strain>
    </source>
</reference>
<reference key="3">
    <citation type="journal article" date="1997" name="Nature">
        <title>The nucleotide sequence of Saccharomyces cerevisiae chromosome XVI.</title>
        <authorList>
            <person name="Bussey H."/>
            <person name="Storms R.K."/>
            <person name="Ahmed A."/>
            <person name="Albermann K."/>
            <person name="Allen E."/>
            <person name="Ansorge W."/>
            <person name="Araujo R."/>
            <person name="Aparicio A."/>
            <person name="Barrell B.G."/>
            <person name="Badcock K."/>
            <person name="Benes V."/>
            <person name="Botstein D."/>
            <person name="Bowman S."/>
            <person name="Brueckner M."/>
            <person name="Carpenter J."/>
            <person name="Cherry J.M."/>
            <person name="Chung E."/>
            <person name="Churcher C.M."/>
            <person name="Coster F."/>
            <person name="Davis K."/>
            <person name="Davis R.W."/>
            <person name="Dietrich F.S."/>
            <person name="Delius H."/>
            <person name="DiPaolo T."/>
            <person name="Dubois E."/>
            <person name="Duesterhoeft A."/>
            <person name="Duncan M."/>
            <person name="Floeth M."/>
            <person name="Fortin N."/>
            <person name="Friesen J.D."/>
            <person name="Fritz C."/>
            <person name="Goffeau A."/>
            <person name="Hall J."/>
            <person name="Hebling U."/>
            <person name="Heumann K."/>
            <person name="Hilbert H."/>
            <person name="Hillier L.W."/>
            <person name="Hunicke-Smith S."/>
            <person name="Hyman R.W."/>
            <person name="Johnston M."/>
            <person name="Kalman S."/>
            <person name="Kleine K."/>
            <person name="Komp C."/>
            <person name="Kurdi O."/>
            <person name="Lashkari D."/>
            <person name="Lew H."/>
            <person name="Lin A."/>
            <person name="Lin D."/>
            <person name="Louis E.J."/>
            <person name="Marathe R."/>
            <person name="Messenguy F."/>
            <person name="Mewes H.-W."/>
            <person name="Mirtipati S."/>
            <person name="Moestl D."/>
            <person name="Mueller-Auer S."/>
            <person name="Namath A."/>
            <person name="Nentwich U."/>
            <person name="Oefner P."/>
            <person name="Pearson D."/>
            <person name="Petel F.X."/>
            <person name="Pohl T.M."/>
            <person name="Purnelle B."/>
            <person name="Rajandream M.A."/>
            <person name="Rechmann S."/>
            <person name="Rieger M."/>
            <person name="Riles L."/>
            <person name="Roberts D."/>
            <person name="Schaefer M."/>
            <person name="Scharfe M."/>
            <person name="Scherens B."/>
            <person name="Schramm S."/>
            <person name="Schroeder M."/>
            <person name="Sdicu A.-M."/>
            <person name="Tettelin H."/>
            <person name="Urrestarazu L.A."/>
            <person name="Ushinsky S."/>
            <person name="Vierendeels F."/>
            <person name="Vissers S."/>
            <person name="Voss H."/>
            <person name="Walsh S.V."/>
            <person name="Wambutt R."/>
            <person name="Wang Y."/>
            <person name="Wedler E."/>
            <person name="Wedler H."/>
            <person name="Winnett E."/>
            <person name="Zhong W.-W."/>
            <person name="Zollner A."/>
            <person name="Vo D.H."/>
            <person name="Hani J."/>
        </authorList>
    </citation>
    <scope>NUCLEOTIDE SEQUENCE [LARGE SCALE GENOMIC DNA]</scope>
    <source>
        <strain>ATCC 204508 / S288c</strain>
    </source>
</reference>
<reference key="4">
    <citation type="journal article" date="2014" name="G3 (Bethesda)">
        <title>The reference genome sequence of Saccharomyces cerevisiae: Then and now.</title>
        <authorList>
            <person name="Engel S.R."/>
            <person name="Dietrich F.S."/>
            <person name="Fisk D.G."/>
            <person name="Binkley G."/>
            <person name="Balakrishnan R."/>
            <person name="Costanzo M.C."/>
            <person name="Dwight S.S."/>
            <person name="Hitz B.C."/>
            <person name="Karra K."/>
            <person name="Nash R.S."/>
            <person name="Weng S."/>
            <person name="Wong E.D."/>
            <person name="Lloyd P."/>
            <person name="Skrzypek M.S."/>
            <person name="Miyasato S.R."/>
            <person name="Simison M."/>
            <person name="Cherry J.M."/>
        </authorList>
    </citation>
    <scope>GENOME REANNOTATION</scope>
    <source>
        <strain>ATCC 204508 / S288c</strain>
    </source>
</reference>
<reference key="5">
    <citation type="journal article" date="1996" name="Science">
        <title>Thymine-thymine dimer bypass by yeast DNA polymerase zeta.</title>
        <authorList>
            <person name="Nelson J.R."/>
            <person name="Lawrence C.W."/>
            <person name="Hinkle D.C."/>
        </authorList>
    </citation>
    <scope>FUNCTION</scope>
    <scope>INTERACTION WITH REV7</scope>
</reference>
<reference key="6">
    <citation type="journal article" date="2001" name="Genes Dev.">
        <title>Roles of yeast DNA polymerases delta and zeta and of Rev1 in the bypass of abasic sites.</title>
        <authorList>
            <person name="Haracska L."/>
            <person name="Unk I."/>
            <person name="Johnson R.E."/>
            <person name="Johansson E."/>
            <person name="Burgers P.M.J."/>
            <person name="Prakash S."/>
            <person name="Prakash L."/>
        </authorList>
    </citation>
    <scope>FUNCTION</scope>
    <scope>CATALYTIC ACTIVITY</scope>
    <scope>BIOPHYSICOCHEMICAL PROPERTIES</scope>
</reference>
<reference key="7">
    <citation type="journal article" date="2006" name="Genetics">
        <title>Saccharomyces cerevisiae polymerase zeta functions in mitochondria.</title>
        <authorList>
            <person name="Zhang H."/>
            <person name="Chatterjee A."/>
            <person name="Singh K.K."/>
        </authorList>
    </citation>
    <scope>FUNCTION</scope>
    <scope>SUBCELLULAR LOCATION</scope>
</reference>
<reference key="8">
    <citation type="journal article" date="2012" name="Nat. Chem. Biol.">
        <title>Eukaryotic DNA polymerases require an iron-sulfur cluster for the formation of active complexes.</title>
        <authorList>
            <person name="Netz D.J."/>
            <person name="Stith C.M."/>
            <person name="Stumpfig M."/>
            <person name="Kopf G."/>
            <person name="Vogel D."/>
            <person name="Genau H.M."/>
            <person name="Stodola J.L."/>
            <person name="Lill R."/>
            <person name="Burgers P.M."/>
            <person name="Pierik A.J."/>
        </authorList>
    </citation>
    <scope>COFACTOR</scope>
    <scope>IRON-SULFUR-BINDING</scope>
</reference>
<dbReference type="EC" id="2.7.7.7"/>
<dbReference type="EMBL" id="M29683">
    <property type="protein sequence ID" value="AAA34968.1"/>
    <property type="molecule type" value="Genomic_DNA"/>
</dbReference>
<dbReference type="EMBL" id="X96770">
    <property type="protein sequence ID" value="CAA65554.1"/>
    <property type="molecule type" value="Genomic_DNA"/>
</dbReference>
<dbReference type="EMBL" id="Z73523">
    <property type="protein sequence ID" value="CAA97873.1"/>
    <property type="molecule type" value="Genomic_DNA"/>
</dbReference>
<dbReference type="EMBL" id="BK006949">
    <property type="protein sequence ID" value="DAA11267.1"/>
    <property type="molecule type" value="Genomic_DNA"/>
</dbReference>
<dbReference type="PIR" id="A33602">
    <property type="entry name" value="A33602"/>
</dbReference>
<dbReference type="RefSeq" id="NP_015158.1">
    <property type="nucleotide sequence ID" value="NM_001183981.1"/>
</dbReference>
<dbReference type="PDB" id="6V8P">
    <property type="method" value="EM"/>
    <property type="resolution" value="4.10 A"/>
    <property type="chains" value="A=1-1504"/>
</dbReference>
<dbReference type="PDB" id="6V93">
    <property type="method" value="EM"/>
    <property type="resolution" value="3.10 A"/>
    <property type="chains" value="A=1-1504"/>
</dbReference>
<dbReference type="PDB" id="7LXD">
    <property type="method" value="EM"/>
    <property type="resolution" value="4.11 A"/>
    <property type="chains" value="A=1-1504"/>
</dbReference>
<dbReference type="PDB" id="7S0T">
    <property type="method" value="EM"/>
    <property type="resolution" value="3.05 A"/>
    <property type="chains" value="A=1-1504"/>
</dbReference>
<dbReference type="PDB" id="8TLQ">
    <property type="method" value="EM"/>
    <property type="resolution" value="3.53 A"/>
    <property type="chains" value="A=1-1504"/>
</dbReference>
<dbReference type="PDB" id="8TLT">
    <property type="method" value="EM"/>
    <property type="resolution" value="2.85 A"/>
    <property type="chains" value="A=1-1504"/>
</dbReference>
<dbReference type="PDBsum" id="6V8P"/>
<dbReference type="PDBsum" id="6V93"/>
<dbReference type="PDBsum" id="7LXD"/>
<dbReference type="PDBsum" id="7S0T"/>
<dbReference type="PDBsum" id="8TLQ"/>
<dbReference type="PDBsum" id="8TLT"/>
<dbReference type="EMDB" id="EMD-21108"/>
<dbReference type="EMDB" id="EMD-21115"/>
<dbReference type="EMDB" id="EMD-23570"/>
<dbReference type="EMDB" id="EMD-2409"/>
<dbReference type="EMDB" id="EMD-24793"/>
<dbReference type="EMDB" id="EMD-41371"/>
<dbReference type="EMDB" id="EMD-41372"/>
<dbReference type="SMR" id="P14284"/>
<dbReference type="BioGRID" id="36016">
    <property type="interactions" value="151"/>
</dbReference>
<dbReference type="ComplexPortal" id="CPX-1091">
    <property type="entry name" value="DNA polymerase zeta complex"/>
</dbReference>
<dbReference type="DIP" id="DIP-8024N"/>
<dbReference type="FunCoup" id="P14284">
    <property type="interactions" value="776"/>
</dbReference>
<dbReference type="IntAct" id="P14284">
    <property type="interactions" value="3"/>
</dbReference>
<dbReference type="MINT" id="P14284"/>
<dbReference type="STRING" id="4932.YPL167C"/>
<dbReference type="iPTMnet" id="P14284"/>
<dbReference type="PaxDb" id="4932-YPL167C"/>
<dbReference type="PeptideAtlas" id="P14284"/>
<dbReference type="EnsemblFungi" id="YPL167C_mRNA">
    <property type="protein sequence ID" value="YPL167C"/>
    <property type="gene ID" value="YPL167C"/>
</dbReference>
<dbReference type="GeneID" id="855936"/>
<dbReference type="KEGG" id="sce:YPL167C"/>
<dbReference type="AGR" id="SGD:S000006088"/>
<dbReference type="SGD" id="S000006088">
    <property type="gene designation" value="REV3"/>
</dbReference>
<dbReference type="VEuPathDB" id="FungiDB:YPL167C"/>
<dbReference type="eggNOG" id="KOG0968">
    <property type="taxonomic scope" value="Eukaryota"/>
</dbReference>
<dbReference type="GeneTree" id="ENSGT00940000169521"/>
<dbReference type="HOGENOM" id="CLU_000203_3_1_1"/>
<dbReference type="InParanoid" id="P14284"/>
<dbReference type="OMA" id="GRNKMGF"/>
<dbReference type="OrthoDB" id="2414538at2759"/>
<dbReference type="BioCyc" id="YEAST:G3O-34063-MONOMER"/>
<dbReference type="Reactome" id="R-SCE-110312">
    <property type="pathway name" value="Translesion synthesis by REV1"/>
</dbReference>
<dbReference type="Reactome" id="R-SCE-5655862">
    <property type="pathway name" value="Translesion synthesis by POLK"/>
</dbReference>
<dbReference type="Reactome" id="R-SCE-5656121">
    <property type="pathway name" value="Translesion synthesis by POLI"/>
</dbReference>
<dbReference type="SABIO-RK" id="P14284"/>
<dbReference type="BioGRID-ORCS" id="855936">
    <property type="hits" value="0 hits in 10 CRISPR screens"/>
</dbReference>
<dbReference type="PRO" id="PR:P14284"/>
<dbReference type="Proteomes" id="UP000002311">
    <property type="component" value="Chromosome XVI"/>
</dbReference>
<dbReference type="RNAct" id="P14284">
    <property type="molecule type" value="protein"/>
</dbReference>
<dbReference type="GO" id="GO:0005739">
    <property type="term" value="C:mitochondrion"/>
    <property type="evidence" value="ECO:0000314"/>
    <property type="project" value="ComplexPortal"/>
</dbReference>
<dbReference type="GO" id="GO:0005634">
    <property type="term" value="C:nucleus"/>
    <property type="evidence" value="ECO:0000318"/>
    <property type="project" value="GO_Central"/>
</dbReference>
<dbReference type="GO" id="GO:0016035">
    <property type="term" value="C:zeta DNA polymerase complex"/>
    <property type="evidence" value="ECO:0000314"/>
    <property type="project" value="SGD"/>
</dbReference>
<dbReference type="GO" id="GO:0051539">
    <property type="term" value="F:4 iron, 4 sulfur cluster binding"/>
    <property type="evidence" value="ECO:0007669"/>
    <property type="project" value="UniProtKB-KW"/>
</dbReference>
<dbReference type="GO" id="GO:0003677">
    <property type="term" value="F:DNA binding"/>
    <property type="evidence" value="ECO:0007669"/>
    <property type="project" value="UniProtKB-KW"/>
</dbReference>
<dbReference type="GO" id="GO:0003887">
    <property type="term" value="F:DNA-directed DNA polymerase activity"/>
    <property type="evidence" value="ECO:0000314"/>
    <property type="project" value="SGD"/>
</dbReference>
<dbReference type="GO" id="GO:0000166">
    <property type="term" value="F:nucleotide binding"/>
    <property type="evidence" value="ECO:0007669"/>
    <property type="project" value="InterPro"/>
</dbReference>
<dbReference type="GO" id="GO:0008270">
    <property type="term" value="F:zinc ion binding"/>
    <property type="evidence" value="ECO:0007669"/>
    <property type="project" value="UniProtKB-KW"/>
</dbReference>
<dbReference type="GO" id="GO:0006260">
    <property type="term" value="P:DNA replication"/>
    <property type="evidence" value="ECO:0007669"/>
    <property type="project" value="UniProtKB-KW"/>
</dbReference>
<dbReference type="GO" id="GO:0000724">
    <property type="term" value="P:double-strand break repair via homologous recombination"/>
    <property type="evidence" value="ECO:0000318"/>
    <property type="project" value="GO_Central"/>
</dbReference>
<dbReference type="GO" id="GO:0070987">
    <property type="term" value="P:error-free translesion synthesis"/>
    <property type="evidence" value="ECO:0000314"/>
    <property type="project" value="SGD"/>
</dbReference>
<dbReference type="GO" id="GO:0042276">
    <property type="term" value="P:error-prone translesion synthesis"/>
    <property type="evidence" value="ECO:0000314"/>
    <property type="project" value="SGD"/>
</dbReference>
<dbReference type="CDD" id="cd05778">
    <property type="entry name" value="DNA_polB_zeta_exo"/>
    <property type="match status" value="1"/>
</dbReference>
<dbReference type="CDD" id="cd05534">
    <property type="entry name" value="POLBc_zeta"/>
    <property type="match status" value="1"/>
</dbReference>
<dbReference type="FunFam" id="1.10.132.60:FF:000007">
    <property type="entry name" value="DNA polymerase"/>
    <property type="match status" value="1"/>
</dbReference>
<dbReference type="FunFam" id="3.30.420.10:FF:000156">
    <property type="entry name" value="DNA polymerase"/>
    <property type="match status" value="1"/>
</dbReference>
<dbReference type="FunFam" id="1.10.287.690:FF:000002">
    <property type="entry name" value="DNA polymerase zeta"/>
    <property type="match status" value="1"/>
</dbReference>
<dbReference type="Gene3D" id="1.10.132.60">
    <property type="entry name" value="DNA polymerase family B, C-terminal domain"/>
    <property type="match status" value="1"/>
</dbReference>
<dbReference type="Gene3D" id="3.30.342.10">
    <property type="entry name" value="DNA Polymerase, chain B, domain 1"/>
    <property type="match status" value="1"/>
</dbReference>
<dbReference type="Gene3D" id="1.10.287.690">
    <property type="entry name" value="Helix hairpin bin"/>
    <property type="match status" value="1"/>
</dbReference>
<dbReference type="Gene3D" id="3.90.1600.10">
    <property type="entry name" value="Palm domain of DNA polymerase"/>
    <property type="match status" value="1"/>
</dbReference>
<dbReference type="Gene3D" id="3.30.420.10">
    <property type="entry name" value="Ribonuclease H-like superfamily/Ribonuclease H"/>
    <property type="match status" value="1"/>
</dbReference>
<dbReference type="InterPro" id="IPR006172">
    <property type="entry name" value="DNA-dir_DNA_pol_B"/>
</dbReference>
<dbReference type="InterPro" id="IPR017964">
    <property type="entry name" value="DNA-dir_DNA_pol_B_CS"/>
</dbReference>
<dbReference type="InterPro" id="IPR006133">
    <property type="entry name" value="DNA-dir_DNA_pol_B_exonuc"/>
</dbReference>
<dbReference type="InterPro" id="IPR006134">
    <property type="entry name" value="DNA-dir_DNA_pol_B_multi_dom"/>
</dbReference>
<dbReference type="InterPro" id="IPR043502">
    <property type="entry name" value="DNA/RNA_pol_sf"/>
</dbReference>
<dbReference type="InterPro" id="IPR042087">
    <property type="entry name" value="DNA_pol_B_thumb"/>
</dbReference>
<dbReference type="InterPro" id="IPR023211">
    <property type="entry name" value="DNA_pol_palm_dom_sf"/>
</dbReference>
<dbReference type="InterPro" id="IPR056435">
    <property type="entry name" value="DPOD/Z_N"/>
</dbReference>
<dbReference type="InterPro" id="IPR030559">
    <property type="entry name" value="PolZ_Rev3"/>
</dbReference>
<dbReference type="InterPro" id="IPR056447">
    <property type="entry name" value="REV3_N"/>
</dbReference>
<dbReference type="InterPro" id="IPR012337">
    <property type="entry name" value="RNaseH-like_sf"/>
</dbReference>
<dbReference type="InterPro" id="IPR036397">
    <property type="entry name" value="RNaseH_sf"/>
</dbReference>
<dbReference type="InterPro" id="IPR025687">
    <property type="entry name" value="Znf-C4pol"/>
</dbReference>
<dbReference type="PANTHER" id="PTHR45812">
    <property type="entry name" value="DNA POLYMERASE ZETA CATALYTIC SUBUNIT"/>
    <property type="match status" value="1"/>
</dbReference>
<dbReference type="PANTHER" id="PTHR45812:SF1">
    <property type="entry name" value="DNA POLYMERASE ZETA CATALYTIC SUBUNIT"/>
    <property type="match status" value="1"/>
</dbReference>
<dbReference type="Pfam" id="PF00136">
    <property type="entry name" value="DNA_pol_B"/>
    <property type="match status" value="1"/>
</dbReference>
<dbReference type="Pfam" id="PF03104">
    <property type="entry name" value="DNA_pol_B_exo1"/>
    <property type="match status" value="1"/>
</dbReference>
<dbReference type="Pfam" id="PF24055">
    <property type="entry name" value="POL3_N"/>
    <property type="match status" value="1"/>
</dbReference>
<dbReference type="Pfam" id="PF24065">
    <property type="entry name" value="REV3_N"/>
    <property type="match status" value="1"/>
</dbReference>
<dbReference type="Pfam" id="PF14260">
    <property type="entry name" value="zf-C4pol"/>
    <property type="match status" value="1"/>
</dbReference>
<dbReference type="PRINTS" id="PR00106">
    <property type="entry name" value="DNAPOLB"/>
</dbReference>
<dbReference type="SMART" id="SM00486">
    <property type="entry name" value="POLBc"/>
    <property type="match status" value="1"/>
</dbReference>
<dbReference type="SUPFAM" id="SSF56672">
    <property type="entry name" value="DNA/RNA polymerases"/>
    <property type="match status" value="1"/>
</dbReference>
<dbReference type="SUPFAM" id="SSF53098">
    <property type="entry name" value="Ribonuclease H-like"/>
    <property type="match status" value="1"/>
</dbReference>
<dbReference type="PROSITE" id="PS00116">
    <property type="entry name" value="DNA_POLYMERASE_B"/>
    <property type="match status" value="1"/>
</dbReference>
<sequence>MSRESNDTIQSDTVRSSSKSDYFRIQLNNQDYYMSKPTFLDPSHGESLPLNQFSQVPNIRVFGALPTGHQVLCHVHGILPYMFIKYDGQITDTSTLRHQRCAQVHKTLEVKIRASFKRKKDDKHDLAGDKLGNLNFVADVSVVKGIPFYGYHVGWNLFYKISLLNPSCLSRISELIRDGKIFGKKFEIYESHIPYLLQWTADFNLFGCSWINVDRCYFRSPVLNSILDIDKLTINDDLQLLLDRFCDFKCNVLSRRDFPRVGNGLIEIDILPQFIKNREKLQHRDIHHDFLEKLGDISDIPVKPYVSSARDMINELTMQREELSLKEYKEPPETKRHVSGHQWQSSGEFEAFYKKAQHKTSTFDGQIPNFENFIDKNQKFSAINTPYEALPQLWPRLPQIEINNNSMQDKKNDDQVNASFTEYEICGVDNENEGVKGSNIKSRSYSWLPESIASPKDSTILLDHQTKYHNTINFSMDCAMTQNMASKRKLRSSVSANKTSLLSRKRKKVMAAGLRYGKRAFVYGEPPFGYQDILNKLEDEGFPKIDYKDPFFSNPVDLENKPYAYAGKRFEISSTHVSTRIPVQFGGETVSVYNKPTFDMFSSWKYALKPPTYDAVQKWYNKVPSMGNKKTESQISMHTPHSKFLYKFASDVSGKQKRKKSSVHDSLTHLTLEIHANTRSDKIPDPAIDEVSMIIWCLEEETFPLDLDIAYEGIMIVHKASEDSTFPTKIQHCINEIPVMFYESEFEMFEALTDLVLLLDPDILSGFEIHNFSWGYIIERCQKIHQFDIVRELARVKCQIKTKLSDTWGYAHSSGIMITGRHMINIWRALRSDVNLTQYTIESAAFNILHKRLPHFSFESLTNMWNAKKSTTELKTVLNYWLSRAQINIQLLRKQDYIARNIEQARLIGIDFHSVYYRGSQFKVESFLIRICKSESFILLSPGKKDVRKQKALECVPLVMEPESAFYKSPLIVLDFQSLYPSIMIGYNYCYSTMIGRVREINLTENNLGVSKFSLPRNILALLKNDVTIAPNGVVYAKTSVRKSTLSKMLTDILDVRVMIKKTMNEIGDDNTTLKRLLNNKQLALKLLANVTYGYTSASFSGRMPCSDLADSIVQTGRETLEKAIDIIEKDETWNAKVVYGDTDSLFVYLPGKTAIEAFSIGHAMAERVTQNNPKPIFLKFEKVYHPSILISKKRYVGFSYESPSQTLPIFDAKGIETVRRDGIPAQQKIIEKCIRLLFQTKDLSKIKKYLQNEFFKIQIGKVSAQDFCFAKEVKLGAYKSEKTAPAGAVVVKRRINEDHRAEPQYKERIPYLVVKGKQGQLLRERCVSPEEFLEGENLELDSEYYINKILIPPLDRLFNLIGINVGNWAQEIVKSKRASTTTTKVENITRVGTSATCCNCGEELTKICSLQLCDDCLEKRSTTTLSFLIKKLKRQKEYQTLKTVCRTCSYRYTSDAGIENDHIASKCNSYDCPVFYSRVKAERYLRDNQSVQREEALISLNDW</sequence>
<comment type="function">
    <text evidence="3 4 6 7">Nonessential DNA polymerase. Required for DNA damage induced mutagenesis. Involved in DNA repair, mitochondrial DNA repair and translesion synthesis. Translesion synthesis in S.cerevisiae may use a specialized DNA polymerase that is not required for other DNA replicative processes. Has a role in the bypass of abasic (AP) sites. Highly inefficient in incorporating nucleotides opposite the AP site, but efficiently extends from nucleotides, particularly an A, inserted opposite the lesion.</text>
</comment>
<comment type="catalytic activity">
    <reaction evidence="3">
        <text>DNA(n) + a 2'-deoxyribonucleoside 5'-triphosphate = DNA(n+1) + diphosphate</text>
        <dbReference type="Rhea" id="RHEA:22508"/>
        <dbReference type="Rhea" id="RHEA-COMP:17339"/>
        <dbReference type="Rhea" id="RHEA-COMP:17340"/>
        <dbReference type="ChEBI" id="CHEBI:33019"/>
        <dbReference type="ChEBI" id="CHEBI:61560"/>
        <dbReference type="ChEBI" id="CHEBI:173112"/>
        <dbReference type="EC" id="2.7.7.7"/>
    </reaction>
</comment>
<comment type="cofactor">
    <cofactor evidence="5">
        <name>[4Fe-4S] cluster</name>
        <dbReference type="ChEBI" id="CHEBI:49883"/>
    </cofactor>
    <text evidence="5">Binds 1 [4Fe-4S] cluster.</text>
</comment>
<comment type="biophysicochemical properties">
    <kinetics>
        <KM evidence="3">543 uM for dGTP (insertion opposite abasic site)</KM>
        <KM evidence="3">81 uM for dATP (insertion opposite abasic site)</KM>
        <KM evidence="3">125 uM for dTTP (insertion opposite abasic site)</KM>
        <KM evidence="3">113 uM for dCTP (insertion opposite abasic site)</KM>
        <KM evidence="3">0.11 uM for dGTP (insertion opposite C)</KM>
        <KM evidence="3">267 uM for dATP (insertion opposite C)</KM>
        <KM evidence="3">552 uM for dTTP (insertion opposite C)</KM>
        <KM evidence="3">321 uM for dCTP (insertion opposite C)</KM>
        <KM evidence="3">344 uM for dGTP (insertion opposite G)</KM>
        <KM evidence="3">118 uM for dATP (insertion opposite G)</KM>
        <KM evidence="3">428 uM for dTTP (insertion opposite G)</KM>
        <KM evidence="3">0.14 uM for dCTP (insertion opposite G)</KM>
        <KM evidence="3">6.5 uM for dTTP (extension from G, A, T, or C opposite abasic site)</KM>
        <KM evidence="3">2.3 uM for dTTP (extension from G, A, T, or C opposite abasic site)</KM>
        <KM evidence="3">49 uM for dTTP (extension from G, A, T, or C opposite abasic site)</KM>
        <KM evidence="3">21 uM for dTTP (extension from G, A, T, or C opposite abasic site)</KM>
        <KM evidence="3">0.35 uM for dTTP (extension from G, A, T, or C opposite C)</KM>
        <KM evidence="3">2.3 uM for dTTP (extension from G, A, T, or C opposite C)</KM>
        <KM evidence="3">15 uM for dTTP (extension from G, A, T, or C opposite C)</KM>
        <KM evidence="3">26 uM for dTTP (extension from G, A, T, or C opposite C)</KM>
        <KM evidence="3">6.9 uM for dTTP (extension from G, A, T, or C opposite G)</KM>
        <KM evidence="3">2.1 uM for dTTP (extension from G, A, T, or C opposite G)</KM>
        <KM evidence="3">28.8 uM for dTTP (extension from G, A, T, or C opposite G)</KM>
        <KM evidence="3">0.23 uM for dTTP (extension from G, A, T, or C opposite G)</KM>
    </kinetics>
</comment>
<comment type="subunit">
    <text>Forms DNA polymerase zeta with REV7.</text>
</comment>
<comment type="interaction">
    <interactant intactId="EBI-6155">
        <id>P14284</id>
    </interactant>
    <interactant intactId="EBI-14960">
        <id>P38927</id>
        <label>REV7</label>
    </interactant>
    <organismsDiffer>false</organismsDiffer>
    <experiments>3</experiments>
</comment>
<comment type="subcellular location">
    <subcellularLocation>
        <location evidence="4">Mitochondrion</location>
    </subcellularLocation>
    <subcellularLocation>
        <location evidence="8">Nucleus</location>
    </subcellularLocation>
</comment>
<comment type="domain">
    <text evidence="1">The CysB motif binds 1 4Fe-4S cluster and is required for the formation of polymerase complexes.</text>
</comment>
<comment type="similarity">
    <text evidence="8">Belongs to the DNA polymerase type-B family.</text>
</comment>
<organism>
    <name type="scientific">Saccharomyces cerevisiae (strain ATCC 204508 / S288c)</name>
    <name type="common">Baker's yeast</name>
    <dbReference type="NCBI Taxonomy" id="559292"/>
    <lineage>
        <taxon>Eukaryota</taxon>
        <taxon>Fungi</taxon>
        <taxon>Dikarya</taxon>
        <taxon>Ascomycota</taxon>
        <taxon>Saccharomycotina</taxon>
        <taxon>Saccharomycetes</taxon>
        <taxon>Saccharomycetales</taxon>
        <taxon>Saccharomycetaceae</taxon>
        <taxon>Saccharomyces</taxon>
    </lineage>
</organism>
<protein>
    <recommendedName>
        <fullName>DNA polymerase zeta catalytic subunit</fullName>
        <ecNumber>2.7.7.7</ecNumber>
    </recommendedName>
    <alternativeName>
        <fullName>Protein reversionless 3</fullName>
    </alternativeName>
</protein>
<feature type="chain" id="PRO_0000046470" description="DNA polymerase zeta catalytic subunit">
    <location>
        <begin position="1"/>
        <end position="1504"/>
    </location>
</feature>
<feature type="zinc finger region" description="CysA-type" evidence="2">
    <location>
        <begin position="1398"/>
        <end position="1417"/>
    </location>
</feature>
<feature type="short sequence motif" description="CysB motif" evidence="2">
    <location>
        <begin position="1446"/>
        <end position="1473"/>
    </location>
</feature>
<feature type="binding site" evidence="2">
    <location>
        <position position="1398"/>
    </location>
    <ligand>
        <name>Zn(2+)</name>
        <dbReference type="ChEBI" id="CHEBI:29105"/>
    </ligand>
</feature>
<feature type="binding site" evidence="2">
    <location>
        <position position="1401"/>
    </location>
    <ligand>
        <name>Zn(2+)</name>
        <dbReference type="ChEBI" id="CHEBI:29105"/>
    </ligand>
</feature>
<feature type="binding site" evidence="2">
    <location>
        <position position="1414"/>
    </location>
    <ligand>
        <name>Zn(2+)</name>
        <dbReference type="ChEBI" id="CHEBI:29105"/>
    </ligand>
</feature>
<feature type="binding site" evidence="2">
    <location>
        <position position="1417"/>
    </location>
    <ligand>
        <name>Zn(2+)</name>
        <dbReference type="ChEBI" id="CHEBI:29105"/>
    </ligand>
</feature>
<feature type="binding site" evidence="2">
    <location>
        <position position="1446"/>
    </location>
    <ligand>
        <name>[4Fe-4S] cluster</name>
        <dbReference type="ChEBI" id="CHEBI:49883"/>
    </ligand>
</feature>
<feature type="binding site" evidence="2">
    <location>
        <position position="1449"/>
    </location>
    <ligand>
        <name>[4Fe-4S] cluster</name>
        <dbReference type="ChEBI" id="CHEBI:49883"/>
    </ligand>
</feature>
<feature type="binding site" evidence="2">
    <location>
        <position position="1468"/>
    </location>
    <ligand>
        <name>[4Fe-4S] cluster</name>
        <dbReference type="ChEBI" id="CHEBI:49883"/>
    </ligand>
</feature>
<feature type="binding site" evidence="2">
    <location>
        <position position="1473"/>
    </location>
    <ligand>
        <name>[4Fe-4S] cluster</name>
        <dbReference type="ChEBI" id="CHEBI:49883"/>
    </ligand>
</feature>
<feature type="strand" evidence="11">
    <location>
        <begin position="22"/>
        <end position="26"/>
    </location>
</feature>
<feature type="strand" evidence="11">
    <location>
        <begin position="29"/>
        <end position="35"/>
    </location>
</feature>
<feature type="strand" evidence="9">
    <location>
        <begin position="46"/>
        <end position="48"/>
    </location>
</feature>
<feature type="strand" evidence="11">
    <location>
        <begin position="56"/>
        <end position="64"/>
    </location>
</feature>
<feature type="strand" evidence="11">
    <location>
        <begin position="70"/>
        <end position="75"/>
    </location>
</feature>
<feature type="strand" evidence="11">
    <location>
        <begin position="81"/>
        <end position="85"/>
    </location>
</feature>
<feature type="helix" evidence="11">
    <location>
        <begin position="96"/>
        <end position="116"/>
    </location>
</feature>
<feature type="strand" evidence="11">
    <location>
        <begin position="135"/>
        <end position="150"/>
    </location>
</feature>
<feature type="strand" evidence="11">
    <location>
        <begin position="156"/>
        <end position="164"/>
    </location>
</feature>
<feature type="helix" evidence="11">
    <location>
        <begin position="166"/>
        <end position="168"/>
    </location>
</feature>
<feature type="helix" evidence="11">
    <location>
        <begin position="169"/>
        <end position="177"/>
    </location>
</feature>
<feature type="strand" evidence="11">
    <location>
        <begin position="180"/>
        <end position="184"/>
    </location>
</feature>
<feature type="strand" evidence="11">
    <location>
        <begin position="188"/>
        <end position="190"/>
    </location>
</feature>
<feature type="helix" evidence="11">
    <location>
        <begin position="195"/>
        <end position="202"/>
    </location>
</feature>
<feature type="strand" evidence="11">
    <location>
        <begin position="209"/>
        <end position="214"/>
    </location>
</feature>
<feature type="strand" evidence="11">
    <location>
        <begin position="220"/>
        <end position="223"/>
    </location>
</feature>
<feature type="strand" evidence="11">
    <location>
        <begin position="226"/>
        <end position="228"/>
    </location>
</feature>
<feature type="helix" evidence="11">
    <location>
        <begin position="229"/>
        <end position="232"/>
    </location>
</feature>
<feature type="helix" evidence="11">
    <location>
        <begin position="236"/>
        <end position="245"/>
    </location>
</feature>
<feature type="strand" evidence="11">
    <location>
        <begin position="248"/>
        <end position="252"/>
    </location>
</feature>
<feature type="turn" evidence="11">
    <location>
        <begin position="255"/>
        <end position="257"/>
    </location>
</feature>
<feature type="strand" evidence="11">
    <location>
        <begin position="262"/>
        <end position="270"/>
    </location>
</feature>
<feature type="turn" evidence="11">
    <location>
        <begin position="272"/>
        <end position="274"/>
    </location>
</feature>
<feature type="strand" evidence="11">
    <location>
        <begin position="277"/>
        <end position="279"/>
    </location>
</feature>
<feature type="turn" evidence="11">
    <location>
        <begin position="287"/>
        <end position="290"/>
    </location>
</feature>
<feature type="helix" evidence="11">
    <location>
        <begin position="291"/>
        <end position="294"/>
    </location>
</feature>
<feature type="helix" evidence="11">
    <location>
        <begin position="307"/>
        <end position="321"/>
    </location>
</feature>
<feature type="turn" evidence="11">
    <location>
        <begin position="322"/>
        <end position="324"/>
    </location>
</feature>
<feature type="helix" evidence="11">
    <location>
        <begin position="346"/>
        <end position="359"/>
    </location>
</feature>
<feature type="strand" evidence="11">
    <location>
        <begin position="363"/>
        <end position="365"/>
    </location>
</feature>
<feature type="turn" evidence="11">
    <location>
        <begin position="370"/>
        <end position="372"/>
    </location>
</feature>
<feature type="strand" evidence="10">
    <location>
        <begin position="382"/>
        <end position="384"/>
    </location>
</feature>
<feature type="helix" evidence="11">
    <location>
        <begin position="386"/>
        <end position="389"/>
    </location>
</feature>
<feature type="turn" evidence="10">
    <location>
        <begin position="390"/>
        <end position="393"/>
    </location>
</feature>
<feature type="strand" evidence="11">
    <location>
        <begin position="518"/>
        <end position="523"/>
    </location>
</feature>
<feature type="helix" evidence="11">
    <location>
        <begin position="532"/>
        <end position="539"/>
    </location>
</feature>
<feature type="strand" evidence="11">
    <location>
        <begin position="551"/>
        <end position="554"/>
    </location>
</feature>
<feature type="helix" evidence="11">
    <location>
        <begin position="555"/>
        <end position="558"/>
    </location>
</feature>
<feature type="turn" evidence="10">
    <location>
        <begin position="559"/>
        <end position="562"/>
    </location>
</feature>
<feature type="strand" evidence="11">
    <location>
        <begin position="563"/>
        <end position="565"/>
    </location>
</feature>
<feature type="strand" evidence="11">
    <location>
        <begin position="568"/>
        <end position="570"/>
    </location>
</feature>
<feature type="turn" evidence="11">
    <location>
        <begin position="577"/>
        <end position="579"/>
    </location>
</feature>
<feature type="strand" evidence="10">
    <location>
        <begin position="580"/>
        <end position="582"/>
    </location>
</feature>
<feature type="strand" evidence="9">
    <location>
        <begin position="584"/>
        <end position="589"/>
    </location>
</feature>
<feature type="strand" evidence="11">
    <location>
        <begin position="600"/>
        <end position="605"/>
    </location>
</feature>
<feature type="helix" evidence="11">
    <location>
        <begin position="613"/>
        <end position="622"/>
    </location>
</feature>
<feature type="strand" evidence="11">
    <location>
        <begin position="669"/>
        <end position="676"/>
    </location>
</feature>
<feature type="strand" evidence="11">
    <location>
        <begin position="679"/>
        <end position="682"/>
    </location>
</feature>
<feature type="turn" evidence="11">
    <location>
        <begin position="686"/>
        <end position="688"/>
    </location>
</feature>
<feature type="strand" evidence="11">
    <location>
        <begin position="691"/>
        <end position="698"/>
    </location>
</feature>
<feature type="turn" evidence="9">
    <location>
        <begin position="700"/>
        <end position="702"/>
    </location>
</feature>
<feature type="strand" evidence="11">
    <location>
        <begin position="711"/>
        <end position="717"/>
    </location>
</feature>
<feature type="helix" evidence="11">
    <location>
        <begin position="726"/>
        <end position="734"/>
    </location>
</feature>
<feature type="strand" evidence="11">
    <location>
        <begin position="735"/>
        <end position="737"/>
    </location>
</feature>
<feature type="strand" evidence="11">
    <location>
        <begin position="739"/>
        <end position="744"/>
    </location>
</feature>
<feature type="helix" evidence="11">
    <location>
        <begin position="745"/>
        <end position="759"/>
    </location>
</feature>
<feature type="strand" evidence="11">
    <location>
        <begin position="762"/>
        <end position="765"/>
    </location>
</feature>
<feature type="turn" evidence="11">
    <location>
        <begin position="769"/>
        <end position="771"/>
    </location>
</feature>
<feature type="helix" evidence="11">
    <location>
        <begin position="774"/>
        <end position="783"/>
    </location>
</feature>
<feature type="helix" evidence="11">
    <location>
        <begin position="789"/>
        <end position="793"/>
    </location>
</feature>
<feature type="strand" evidence="11">
    <location>
        <begin position="794"/>
        <end position="798"/>
    </location>
</feature>
<feature type="helix" evidence="11">
    <location>
        <begin position="807"/>
        <end position="812"/>
    </location>
</feature>
<feature type="strand" evidence="11">
    <location>
        <begin position="821"/>
        <end position="823"/>
    </location>
</feature>
<feature type="helix" evidence="11">
    <location>
        <begin position="826"/>
        <end position="833"/>
    </location>
</feature>
<feature type="helix" evidence="11">
    <location>
        <begin position="841"/>
        <end position="849"/>
    </location>
</feature>
<feature type="helix" evidence="11">
    <location>
        <begin position="858"/>
        <end position="865"/>
    </location>
</feature>
<feature type="strand" evidence="11">
    <location>
        <begin position="866"/>
        <end position="869"/>
    </location>
</feature>
<feature type="helix" evidence="11">
    <location>
        <begin position="871"/>
        <end position="895"/>
    </location>
</feature>
<feature type="helix" evidence="11">
    <location>
        <begin position="897"/>
        <end position="908"/>
    </location>
</feature>
<feature type="helix" evidence="11">
    <location>
        <begin position="912"/>
        <end position="917"/>
    </location>
</feature>
<feature type="helix" evidence="11">
    <location>
        <begin position="920"/>
        <end position="932"/>
    </location>
</feature>
<feature type="helix" evidence="11">
    <location>
        <begin position="933"/>
        <end position="935"/>
    </location>
</feature>
<feature type="helix" evidence="11">
    <location>
        <begin position="944"/>
        <end position="948"/>
    </location>
</feature>
<feature type="strand" evidence="11">
    <location>
        <begin position="965"/>
        <end position="967"/>
    </location>
</feature>
<feature type="strand" evidence="11">
    <location>
        <begin position="971"/>
        <end position="976"/>
    </location>
</feature>
<feature type="helix" evidence="11">
    <location>
        <begin position="979"/>
        <end position="987"/>
    </location>
</feature>
<feature type="turn" evidence="9">
    <location>
        <begin position="991"/>
        <end position="993"/>
    </location>
</feature>
<feature type="strand" evidence="11">
    <location>
        <begin position="994"/>
        <end position="1000"/>
    </location>
</feature>
<feature type="strand" evidence="11">
    <location>
        <begin position="1006"/>
        <end position="1008"/>
    </location>
</feature>
<feature type="strand" evidence="11">
    <location>
        <begin position="1011"/>
        <end position="1013"/>
    </location>
</feature>
<feature type="helix" evidence="11">
    <location>
        <begin position="1019"/>
        <end position="1022"/>
    </location>
</feature>
<feature type="strand" evidence="11">
    <location>
        <begin position="1024"/>
        <end position="1029"/>
    </location>
</feature>
<feature type="strand" evidence="11">
    <location>
        <begin position="1033"/>
        <end position="1037"/>
    </location>
</feature>
<feature type="turn" evidence="10">
    <location>
        <begin position="1039"/>
        <end position="1041"/>
    </location>
</feature>
<feature type="helix" evidence="11">
    <location>
        <begin position="1045"/>
        <end position="1066"/>
    </location>
</feature>
<feature type="strand" evidence="9">
    <location>
        <begin position="1068"/>
        <end position="1070"/>
    </location>
</feature>
<feature type="helix" evidence="11">
    <location>
        <begin position="1072"/>
        <end position="1093"/>
    </location>
</feature>
<feature type="turn" evidence="11">
    <location>
        <begin position="1094"/>
        <end position="1097"/>
    </location>
</feature>
<feature type="strand" evidence="9">
    <location>
        <begin position="1099"/>
        <end position="1101"/>
    </location>
</feature>
<feature type="helix" evidence="11">
    <location>
        <begin position="1107"/>
        <end position="1130"/>
    </location>
</feature>
<feature type="strand" evidence="11">
    <location>
        <begin position="1132"/>
        <end position="1134"/>
    </location>
</feature>
<feature type="strand" evidence="11">
    <location>
        <begin position="1137"/>
        <end position="1141"/>
    </location>
</feature>
<feature type="strand" evidence="11">
    <location>
        <begin position="1143"/>
        <end position="1149"/>
    </location>
</feature>
<feature type="turn" evidence="11">
    <location>
        <begin position="1154"/>
        <end position="1156"/>
    </location>
</feature>
<feature type="helix" evidence="11">
    <location>
        <begin position="1157"/>
        <end position="1171"/>
    </location>
</feature>
<feature type="strand" evidence="11">
    <location>
        <begin position="1184"/>
        <end position="1192"/>
    </location>
</feature>
<feature type="strand" evidence="11">
    <location>
        <begin position="1195"/>
        <end position="1203"/>
    </location>
</feature>
<feature type="strand" evidence="11">
    <location>
        <begin position="1210"/>
        <end position="1216"/>
    </location>
</feature>
<feature type="turn" evidence="11">
    <location>
        <begin position="1217"/>
        <end position="1219"/>
    </location>
</feature>
<feature type="strand" evidence="11">
    <location>
        <begin position="1221"/>
        <end position="1223"/>
    </location>
</feature>
<feature type="helix" evidence="11">
    <location>
        <begin position="1225"/>
        <end position="1240"/>
    </location>
</feature>
<feature type="helix" evidence="11">
    <location>
        <begin position="1244"/>
        <end position="1260"/>
    </location>
</feature>
<feature type="strand" evidence="11">
    <location>
        <begin position="1270"/>
        <end position="1274"/>
    </location>
</feature>
<feature type="strand" evidence="10">
    <location>
        <begin position="1280"/>
        <end position="1282"/>
    </location>
</feature>
<feature type="helix" evidence="11">
    <location>
        <begin position="1287"/>
        <end position="1298"/>
    </location>
</feature>
<feature type="strand" evidence="11">
    <location>
        <begin position="1308"/>
        <end position="1313"/>
    </location>
</feature>
<feature type="strand" evidence="9">
    <location>
        <begin position="1318"/>
        <end position="1320"/>
    </location>
</feature>
<feature type="helix" evidence="11">
    <location>
        <begin position="1323"/>
        <end position="1326"/>
    </location>
</feature>
<feature type="helix" evidence="11">
    <location>
        <begin position="1330"/>
        <end position="1335"/>
    </location>
</feature>
<feature type="helix" evidence="11">
    <location>
        <begin position="1343"/>
        <end position="1349"/>
    </location>
</feature>
<feature type="helix" evidence="11">
    <location>
        <begin position="1352"/>
        <end position="1359"/>
    </location>
</feature>
<feature type="turn" evidence="11">
    <location>
        <begin position="1360"/>
        <end position="1363"/>
    </location>
</feature>
<feature type="helix" evidence="11">
    <location>
        <begin position="1366"/>
        <end position="1372"/>
    </location>
</feature>
<feature type="helix" evidence="11">
    <location>
        <begin position="1416"/>
        <end position="1419"/>
    </location>
</feature>
<feature type="helix" evidence="11">
    <location>
        <begin position="1421"/>
        <end position="1454"/>
    </location>
</feature>
<feature type="turn" evidence="11">
    <location>
        <begin position="1459"/>
        <end position="1461"/>
    </location>
</feature>
<feature type="helix" evidence="11">
    <location>
        <begin position="1462"/>
        <end position="1466"/>
    </location>
</feature>
<feature type="helix" evidence="11">
    <location>
        <begin position="1474"/>
        <end position="1486"/>
    </location>
</feature>
<feature type="helix" evidence="11">
    <location>
        <begin position="1489"/>
        <end position="1501"/>
    </location>
</feature>
<accession>P14284</accession>
<accession>D6W3K1</accession>
<proteinExistence type="evidence at protein level"/>
<keyword id="KW-0002">3D-structure</keyword>
<keyword id="KW-0004">4Fe-4S</keyword>
<keyword id="KW-0227">DNA damage</keyword>
<keyword id="KW-0234">DNA repair</keyword>
<keyword id="KW-0235">DNA replication</keyword>
<keyword id="KW-0238">DNA-binding</keyword>
<keyword id="KW-0239">DNA-directed DNA polymerase</keyword>
<keyword id="KW-0408">Iron</keyword>
<keyword id="KW-0411">Iron-sulfur</keyword>
<keyword id="KW-0479">Metal-binding</keyword>
<keyword id="KW-0496">Mitochondrion</keyword>
<keyword id="KW-0548">Nucleotidyltransferase</keyword>
<keyword id="KW-0539">Nucleus</keyword>
<keyword id="KW-1185">Reference proteome</keyword>
<keyword id="KW-0808">Transferase</keyword>
<keyword id="KW-0862">Zinc</keyword>
<keyword id="KW-0863">Zinc-finger</keyword>